<proteinExistence type="inferred from homology"/>
<dbReference type="EMBL" id="AY780259">
    <property type="protein sequence ID" value="AAX21070.1"/>
    <property type="molecule type" value="Genomic_DNA"/>
</dbReference>
<dbReference type="EMBL" id="AY780259">
    <property type="protein sequence ID" value="AAX21091.1"/>
    <property type="molecule type" value="Genomic_DNA"/>
</dbReference>
<dbReference type="GO" id="GO:0009570">
    <property type="term" value="C:chloroplast stroma"/>
    <property type="evidence" value="ECO:0007669"/>
    <property type="project" value="UniProtKB-SubCell"/>
</dbReference>
<dbReference type="GO" id="GO:0005524">
    <property type="term" value="F:ATP binding"/>
    <property type="evidence" value="ECO:0007669"/>
    <property type="project" value="UniProtKB-KW"/>
</dbReference>
<dbReference type="GO" id="GO:0016887">
    <property type="term" value="F:ATP hydrolysis activity"/>
    <property type="evidence" value="ECO:0007669"/>
    <property type="project" value="InterPro"/>
</dbReference>
<dbReference type="CDD" id="cd19505">
    <property type="entry name" value="RecA-like_Ycf2"/>
    <property type="match status" value="1"/>
</dbReference>
<dbReference type="Gene3D" id="3.40.50.300">
    <property type="entry name" value="P-loop containing nucleotide triphosphate hydrolases"/>
    <property type="match status" value="1"/>
</dbReference>
<dbReference type="HAMAP" id="MF_01330">
    <property type="entry name" value="Ycf2"/>
    <property type="match status" value="1"/>
</dbReference>
<dbReference type="InterPro" id="IPR003593">
    <property type="entry name" value="AAA+_ATPase"/>
</dbReference>
<dbReference type="InterPro" id="IPR003959">
    <property type="entry name" value="ATPase_AAA_core"/>
</dbReference>
<dbReference type="InterPro" id="IPR027417">
    <property type="entry name" value="P-loop_NTPase"/>
</dbReference>
<dbReference type="InterPro" id="IPR008543">
    <property type="entry name" value="Uncharacterised_Ycf2"/>
</dbReference>
<dbReference type="InterPro" id="IPR056777">
    <property type="entry name" value="Ycf2_N"/>
</dbReference>
<dbReference type="PANTHER" id="PTHR33078:SF92">
    <property type="entry name" value="PROTEIN YCF2"/>
    <property type="match status" value="1"/>
</dbReference>
<dbReference type="PANTHER" id="PTHR33078">
    <property type="entry name" value="PROTEIN YCF2-RELATED"/>
    <property type="match status" value="1"/>
</dbReference>
<dbReference type="Pfam" id="PF00004">
    <property type="entry name" value="AAA"/>
    <property type="match status" value="1"/>
</dbReference>
<dbReference type="Pfam" id="PF05695">
    <property type="entry name" value="Ycf2"/>
    <property type="match status" value="1"/>
</dbReference>
<dbReference type="SMART" id="SM00382">
    <property type="entry name" value="AAA"/>
    <property type="match status" value="1"/>
</dbReference>
<dbReference type="SUPFAM" id="SSF52540">
    <property type="entry name" value="P-loop containing nucleoside triphosphate hydrolases"/>
    <property type="match status" value="1"/>
</dbReference>
<geneLocation type="chloroplast"/>
<name>YCF2_EUCGG</name>
<keyword id="KW-0067">ATP-binding</keyword>
<keyword id="KW-0150">Chloroplast</keyword>
<keyword id="KW-0547">Nucleotide-binding</keyword>
<keyword id="KW-0934">Plastid</keyword>
<organism>
    <name type="scientific">Eucalyptus globulus subsp. globulus</name>
    <name type="common">Tasmanian blue gum</name>
    <dbReference type="NCBI Taxonomy" id="71271"/>
    <lineage>
        <taxon>Eukaryota</taxon>
        <taxon>Viridiplantae</taxon>
        <taxon>Streptophyta</taxon>
        <taxon>Embryophyta</taxon>
        <taxon>Tracheophyta</taxon>
        <taxon>Spermatophyta</taxon>
        <taxon>Magnoliopsida</taxon>
        <taxon>eudicotyledons</taxon>
        <taxon>Gunneridae</taxon>
        <taxon>Pentapetalae</taxon>
        <taxon>rosids</taxon>
        <taxon>malvids</taxon>
        <taxon>Myrtales</taxon>
        <taxon>Myrtaceae</taxon>
        <taxon>Myrtoideae</taxon>
        <taxon>Eucalypteae</taxon>
        <taxon>Eucalyptus</taxon>
    </lineage>
</organism>
<comment type="function">
    <text>Probable ATPase of unknown function. Its presence in a non-photosynthetic plant (Epifagus virginiana) and experiments in tobacco indicate that it has an essential function which is probably not related to photosynthesis.</text>
</comment>
<comment type="subcellular location">
    <subcellularLocation>
        <location evidence="1">Plastid</location>
        <location evidence="1">Chloroplast stroma</location>
    </subcellularLocation>
</comment>
<comment type="similarity">
    <text evidence="1">Belongs to the Ycf2 family.</text>
</comment>
<accession>Q49KT6</accession>
<protein>
    <recommendedName>
        <fullName evidence="1">Protein Ycf2</fullName>
    </recommendedName>
</protein>
<evidence type="ECO:0000255" key="1">
    <source>
        <dbReference type="HAMAP-Rule" id="MF_01330"/>
    </source>
</evidence>
<feature type="chain" id="PRO_0000242530" description="Protein Ycf2">
    <location>
        <begin position="1"/>
        <end position="2280"/>
    </location>
</feature>
<feature type="binding site" evidence="1">
    <location>
        <begin position="1634"/>
        <end position="1641"/>
    </location>
    <ligand>
        <name>ATP</name>
        <dbReference type="ChEBI" id="CHEBI:30616"/>
    </ligand>
</feature>
<gene>
    <name evidence="1" type="primary">ycf2-A</name>
</gene>
<gene>
    <name evidence="1" type="primary">ycf2-B</name>
</gene>
<reference key="1">
    <citation type="journal article" date="2005" name="DNA Res.">
        <title>Complete nucleotide sequence of the chloroplast genome from the Tasmanian blue gum, Eucalyptus globulus (Myrtaceae).</title>
        <authorList>
            <person name="Steane D.A."/>
        </authorList>
    </citation>
    <scope>NUCLEOTIDE SEQUENCE [LARGE SCALE GENOMIC DNA]</scope>
</reference>
<sequence>MKGHQFKSWIFELREILREIKNSHHFLDSWTQFNSVGSFIHIFFHQERFIKLLDPRIWSILLSRNSQGSTSNRYFTIKGVVLFVVAVLLYRINNRNMVERKNLYLTGLLPIPMNSIGPRNDTLEESFGSSNINRLIVSLLYLPKGKKISESCFLDPKESTWVLPITKKCIMPESNWGSRWWRNWIGKKRDSSCKISNETVAGIEISFKEKDIKYLEFLFVYYMDDPICKDHDWEFLDRLSPSKRRNIINLNSRQLFEILVKDWICYLMFAFREKIPIEVEGFFKQQGAGSTIQSNDIEPISHLFSRKKWAISLQNCAQFHMWQFRQDLFVSWGKNPPESDFLRNISRENWIWLDNVWLVNKDRFFSKVRNVSSNIQYDSTRSSFVQVTDSSQLKGSSDQSRDHFDSISNEDSEYHTLINQREIQQLKERSILWDPSFLQTERTELESDRFSKCLSGYSRLFTEREKEMKNHLLPEEIEEFLGNPTRSILSFFSDRWSELHLGSNPTERSTRDQKLLKKEQDVSFVPSRRSENKEIVNIFKIITYLQNTVSIHPISSDPGCDMVPKDELDMHSSHKISFLNKNTFFDLFHLFHDRNRGGYTLHHDFESEERFQEMADLFTLSISEPDLVYHKGFAFSMDSYVLDQKQFLNEVFNSRDESKKKSLLVLPPLFYEENESFYRRIRKKWVRISCGNDLEDPKPKIVVFASNNIMEAVNQYRWIRNLIQIQYSTYGYIRNVWNRFFLMNRSDRNFEYGIQRDQIGNDTLNHRTIMKYTINQHLSNLKKSQKKWFNPLIFISRTERSVNRDPNAYRYKWSNGSKNFQEHLEHFVSKQKSRFQVVFDRLRINQYSIDWSEVIDKKDLSKSLRFVLSKLLLFLSKFLLFLSNSLPFFFVSFGNTPIHRSEIHVYELKGPNDQLCNQLLESIGLQIVHLKKWKPLLLDDHDTSQKSKLLINGGTISPFFFNKIPKWMIDSFHTRNNRRKSFDNTDSYFSMISHDQDNWLNPVKPFHRSSLISSFYKANRLRFLNNPHHFCFYCNKRFPFYVERARINNSDFTYGQFLNILFIRNKIFSLCGGKKKYAFLERDTISPIESQVSNIFIPNDFPQSGDERSNLYKSFHFAIRSDPLVRRAIYSIADISGTPLTEGQIVNFERTYCQPLSDMNLSDSEGKNLYQYLNFNSNMGLIHTPCSEKYLPSEKRKKRSLCLKKCVEKGQMYRTFQRDSAFSTLSKWNLFQTYMPWFLTSTGYKYLNWIFLDTFSDLLPILSSSQKFVSIFHDIMHGSDISWQILQKKFCLPQWNLISEISSKCLHNLLLSEEMIHRNNESPLISTHLRSPNVREFLYSILFLLLVATYIVRTHLLFVSRAYSELQTEFEKVKSWMIPSYMMELRKLLDRYPTSELNSFWLKNLFLVALEKLGDSLEEIRGSASGGNMLWGGGPAYGFKSIRSKKKYWNINLIDLISIIPNPIHRITFSKKTRHLSHTSKEIYSLIRKRKNVNGDWIDDKIESWVANSDSIDDKEREFLVQFSTLTTEKGIDQILLSLTHSDHLSKNDSGYQMIEQPGAIYLRYLVDIHKKYLMNYEFNTFCLAERRIFLAHYQTITYSQTSCGTNSFHFTSHGKPFSLRLALSPSRGILVIGSIGTGRSYLVKYLATNSYVPFITVFLNKFLDNKPKGFLIDDIDIEDSDDIEDSDNIDRDLDTELELLTRMNALTMDMMPEIDRFYITLQFELAKAMSPCIIWIPNIHDLDVNESNYLSLGLLVNYLSRDCERCSTQNILVIASTHIPQKVDPALIAPNKLNTCIKIRRLLIPQQRKHFFTLSYTRGFHLEKKMFHTNGFGSITMGSNVRDLVALTNEALSISITQKKSILDTNTIRSALHRQTWDLRSQVRSVQDHGILFYQIGRAVAQNVLLSNCPIDPISIYMKKKSCNEGDSYLYKWYFELGTSMKKLTILLYLLSCSAGSIAQDLWSLPGPDEKNEITSYGLVENDSDLVHGLLEVEGALVGSSRTEKDYSQFDNDRVTLLLRPKPRNPLDMMQNGSCSIVDQRFLYEKYESEFEEGEGEGVLDPQQIEEDLFNHIVWAPRIWRPWGFLFDCIERPNSLGFPYWARSFRGKRIIYDEKEELQENDSEFLQSGTMQYQTRDRSSKEQGFFRISQFIWDPADPLFFLFKDQPFVSVFSHREFFADEEMSKGLLTSQTDSPTSIYKRWFIKNTQEKHFELLIHRQRWLRTNSSLSNGFFRSNTPSESYQYLSNLFLSNGRLLDQMTKTLLRKRWLFPDEMKIGFM</sequence>